<name>BAG2_MOUSE</name>
<dbReference type="EMBL" id="AK083600">
    <property type="protein sequence ID" value="BAC38967.1"/>
    <property type="molecule type" value="mRNA"/>
</dbReference>
<dbReference type="EMBL" id="AK144720">
    <property type="protein sequence ID" value="BAE26031.1"/>
    <property type="molecule type" value="mRNA"/>
</dbReference>
<dbReference type="EMBL" id="BC016230">
    <property type="protein sequence ID" value="AAH16230.1"/>
    <property type="molecule type" value="mRNA"/>
</dbReference>
<dbReference type="EMBL" id="BC028944">
    <property type="protein sequence ID" value="AAH28944.1"/>
    <property type="molecule type" value="mRNA"/>
</dbReference>
<dbReference type="CCDS" id="CCDS14864.1"/>
<dbReference type="RefSeq" id="NP_663367.1">
    <property type="nucleotide sequence ID" value="NM_145392.2"/>
</dbReference>
<dbReference type="PDB" id="3CQX">
    <property type="method" value="X-ray"/>
    <property type="resolution" value="2.30 A"/>
    <property type="chains" value="C/D=107-188"/>
</dbReference>
<dbReference type="PDB" id="3D0T">
    <property type="method" value="X-ray"/>
    <property type="resolution" value="2.55 A"/>
    <property type="chains" value="A/B/C/D=107-189"/>
</dbReference>
<dbReference type="PDBsum" id="3CQX"/>
<dbReference type="PDBsum" id="3D0T"/>
<dbReference type="SMR" id="Q91YN9"/>
<dbReference type="BioGRID" id="229449">
    <property type="interactions" value="81"/>
</dbReference>
<dbReference type="FunCoup" id="Q91YN9">
    <property type="interactions" value="439"/>
</dbReference>
<dbReference type="IntAct" id="Q91YN9">
    <property type="interactions" value="74"/>
</dbReference>
<dbReference type="MINT" id="Q91YN9"/>
<dbReference type="STRING" id="10090.ENSMUSP00000042009"/>
<dbReference type="GlyGen" id="Q91YN9">
    <property type="glycosylation" value="1 site, 1 O-linked glycan (1 site)"/>
</dbReference>
<dbReference type="iPTMnet" id="Q91YN9"/>
<dbReference type="PhosphoSitePlus" id="Q91YN9"/>
<dbReference type="SwissPalm" id="Q91YN9"/>
<dbReference type="jPOST" id="Q91YN9"/>
<dbReference type="PaxDb" id="10090-ENSMUSP00000042009"/>
<dbReference type="PeptideAtlas" id="Q91YN9"/>
<dbReference type="ProteomicsDB" id="265199"/>
<dbReference type="Pumba" id="Q91YN9"/>
<dbReference type="TopDownProteomics" id="Q91YN9"/>
<dbReference type="Antibodypedia" id="17541">
    <property type="antibodies" value="325 antibodies from 34 providers"/>
</dbReference>
<dbReference type="DNASU" id="213539"/>
<dbReference type="Ensembl" id="ENSMUST00000044691.9">
    <property type="protein sequence ID" value="ENSMUSP00000042009.8"/>
    <property type="gene ID" value="ENSMUSG00000042215.9"/>
</dbReference>
<dbReference type="GeneID" id="213539"/>
<dbReference type="KEGG" id="mmu:213539"/>
<dbReference type="UCSC" id="uc007any.1">
    <property type="organism name" value="mouse"/>
</dbReference>
<dbReference type="AGR" id="MGI:1891254"/>
<dbReference type="CTD" id="9532"/>
<dbReference type="MGI" id="MGI:1891254">
    <property type="gene designation" value="Bag2"/>
</dbReference>
<dbReference type="VEuPathDB" id="HostDB:ENSMUSG00000042215"/>
<dbReference type="eggNOG" id="KOG3633">
    <property type="taxonomic scope" value="Eukaryota"/>
</dbReference>
<dbReference type="GeneTree" id="ENSGT00390000017590"/>
<dbReference type="HOGENOM" id="CLU_072417_2_0_1"/>
<dbReference type="InParanoid" id="Q91YN9"/>
<dbReference type="OMA" id="LHATKMI"/>
<dbReference type="OrthoDB" id="6284251at2759"/>
<dbReference type="PhylomeDB" id="Q91YN9"/>
<dbReference type="TreeFam" id="TF102012"/>
<dbReference type="Reactome" id="R-MMU-3371453">
    <property type="pathway name" value="Regulation of HSF1-mediated heat shock response"/>
</dbReference>
<dbReference type="BioGRID-ORCS" id="213539">
    <property type="hits" value="2 hits in 77 CRISPR screens"/>
</dbReference>
<dbReference type="ChiTaRS" id="Bag2">
    <property type="organism name" value="mouse"/>
</dbReference>
<dbReference type="EvolutionaryTrace" id="Q91YN9"/>
<dbReference type="PRO" id="PR:Q91YN9"/>
<dbReference type="Proteomes" id="UP000000589">
    <property type="component" value="Chromosome 1"/>
</dbReference>
<dbReference type="RNAct" id="Q91YN9">
    <property type="molecule type" value="protein"/>
</dbReference>
<dbReference type="Bgee" id="ENSMUSG00000042215">
    <property type="expression patterns" value="Expressed in ectoplacental cone and 229 other cell types or tissues"/>
</dbReference>
<dbReference type="ExpressionAtlas" id="Q91YN9">
    <property type="expression patterns" value="baseline and differential"/>
</dbReference>
<dbReference type="GO" id="GO:0030424">
    <property type="term" value="C:axon"/>
    <property type="evidence" value="ECO:0000314"/>
    <property type="project" value="ARUK-UCL"/>
</dbReference>
<dbReference type="GO" id="GO:0030425">
    <property type="term" value="C:dendrite"/>
    <property type="evidence" value="ECO:0000314"/>
    <property type="project" value="ARUK-UCL"/>
</dbReference>
<dbReference type="GO" id="GO:0101031">
    <property type="term" value="C:protein folding chaperone complex"/>
    <property type="evidence" value="ECO:0007669"/>
    <property type="project" value="Ensembl"/>
</dbReference>
<dbReference type="GO" id="GO:0000774">
    <property type="term" value="F:adenyl-nucleotide exchange factor activity"/>
    <property type="evidence" value="ECO:0000250"/>
    <property type="project" value="UniProtKB"/>
</dbReference>
<dbReference type="GO" id="GO:0031072">
    <property type="term" value="F:heat shock protein binding"/>
    <property type="evidence" value="ECO:0000353"/>
    <property type="project" value="ARUK-UCL"/>
</dbReference>
<dbReference type="GO" id="GO:0042802">
    <property type="term" value="F:identical protein binding"/>
    <property type="evidence" value="ECO:0007669"/>
    <property type="project" value="Ensembl"/>
</dbReference>
<dbReference type="GO" id="GO:0051087">
    <property type="term" value="F:protein-folding chaperone binding"/>
    <property type="evidence" value="ECO:0007669"/>
    <property type="project" value="Ensembl"/>
</dbReference>
<dbReference type="GO" id="GO:0048156">
    <property type="term" value="F:tau protein binding"/>
    <property type="evidence" value="ECO:0000353"/>
    <property type="project" value="ARUK-UCL"/>
</dbReference>
<dbReference type="GO" id="GO:0044325">
    <property type="term" value="F:transmembrane transporter binding"/>
    <property type="evidence" value="ECO:0007669"/>
    <property type="project" value="Ensembl"/>
</dbReference>
<dbReference type="GO" id="GO:0031625">
    <property type="term" value="F:ubiquitin protein ligase binding"/>
    <property type="evidence" value="ECO:0000353"/>
    <property type="project" value="ARUK-UCL"/>
</dbReference>
<dbReference type="GO" id="GO:0031397">
    <property type="term" value="P:negative regulation of protein ubiquitination"/>
    <property type="evidence" value="ECO:0000316"/>
    <property type="project" value="ARUK-UCL"/>
</dbReference>
<dbReference type="GO" id="GO:1901800">
    <property type="term" value="P:positive regulation of proteasomal protein catabolic process"/>
    <property type="evidence" value="ECO:0000316"/>
    <property type="project" value="ARUK-UCL"/>
</dbReference>
<dbReference type="GO" id="GO:0010954">
    <property type="term" value="P:positive regulation of protein processing"/>
    <property type="evidence" value="ECO:0007669"/>
    <property type="project" value="Ensembl"/>
</dbReference>
<dbReference type="GO" id="GO:0050821">
    <property type="term" value="P:protein stabilization"/>
    <property type="evidence" value="ECO:0007669"/>
    <property type="project" value="Ensembl"/>
</dbReference>
<dbReference type="FunFam" id="1.20.58.890:FF:000001">
    <property type="entry name" value="BAG family molecular chaperone regulator 2"/>
    <property type="match status" value="1"/>
</dbReference>
<dbReference type="Gene3D" id="1.20.58.890">
    <property type="match status" value="1"/>
</dbReference>
<dbReference type="InterPro" id="IPR037689">
    <property type="entry name" value="BAG2"/>
</dbReference>
<dbReference type="InterPro" id="IPR003103">
    <property type="entry name" value="BAG_domain"/>
</dbReference>
<dbReference type="PANTHER" id="PTHR12334">
    <property type="entry name" value="BAG FAMILY MOLECULAR CHAPERONE REGULATOR 2"/>
    <property type="match status" value="1"/>
</dbReference>
<dbReference type="PANTHER" id="PTHR12334:SF6">
    <property type="entry name" value="BAG FAMILY MOLECULAR CHAPERONE REGULATOR 2"/>
    <property type="match status" value="1"/>
</dbReference>
<dbReference type="SMART" id="SM00264">
    <property type="entry name" value="BAG"/>
    <property type="match status" value="1"/>
</dbReference>
<dbReference type="PROSITE" id="PS51035">
    <property type="entry name" value="BAG"/>
    <property type="match status" value="1"/>
</dbReference>
<reference key="1">
    <citation type="journal article" date="2005" name="Science">
        <title>The transcriptional landscape of the mammalian genome.</title>
        <authorList>
            <person name="Carninci P."/>
            <person name="Kasukawa T."/>
            <person name="Katayama S."/>
            <person name="Gough J."/>
            <person name="Frith M.C."/>
            <person name="Maeda N."/>
            <person name="Oyama R."/>
            <person name="Ravasi T."/>
            <person name="Lenhard B."/>
            <person name="Wells C."/>
            <person name="Kodzius R."/>
            <person name="Shimokawa K."/>
            <person name="Bajic V.B."/>
            <person name="Brenner S.E."/>
            <person name="Batalov S."/>
            <person name="Forrest A.R."/>
            <person name="Zavolan M."/>
            <person name="Davis M.J."/>
            <person name="Wilming L.G."/>
            <person name="Aidinis V."/>
            <person name="Allen J.E."/>
            <person name="Ambesi-Impiombato A."/>
            <person name="Apweiler R."/>
            <person name="Aturaliya R.N."/>
            <person name="Bailey T.L."/>
            <person name="Bansal M."/>
            <person name="Baxter L."/>
            <person name="Beisel K.W."/>
            <person name="Bersano T."/>
            <person name="Bono H."/>
            <person name="Chalk A.M."/>
            <person name="Chiu K.P."/>
            <person name="Choudhary V."/>
            <person name="Christoffels A."/>
            <person name="Clutterbuck D.R."/>
            <person name="Crowe M.L."/>
            <person name="Dalla E."/>
            <person name="Dalrymple B.P."/>
            <person name="de Bono B."/>
            <person name="Della Gatta G."/>
            <person name="di Bernardo D."/>
            <person name="Down T."/>
            <person name="Engstrom P."/>
            <person name="Fagiolini M."/>
            <person name="Faulkner G."/>
            <person name="Fletcher C.F."/>
            <person name="Fukushima T."/>
            <person name="Furuno M."/>
            <person name="Futaki S."/>
            <person name="Gariboldi M."/>
            <person name="Georgii-Hemming P."/>
            <person name="Gingeras T.R."/>
            <person name="Gojobori T."/>
            <person name="Green R.E."/>
            <person name="Gustincich S."/>
            <person name="Harbers M."/>
            <person name="Hayashi Y."/>
            <person name="Hensch T.K."/>
            <person name="Hirokawa N."/>
            <person name="Hill D."/>
            <person name="Huminiecki L."/>
            <person name="Iacono M."/>
            <person name="Ikeo K."/>
            <person name="Iwama A."/>
            <person name="Ishikawa T."/>
            <person name="Jakt M."/>
            <person name="Kanapin A."/>
            <person name="Katoh M."/>
            <person name="Kawasawa Y."/>
            <person name="Kelso J."/>
            <person name="Kitamura H."/>
            <person name="Kitano H."/>
            <person name="Kollias G."/>
            <person name="Krishnan S.P."/>
            <person name="Kruger A."/>
            <person name="Kummerfeld S.K."/>
            <person name="Kurochkin I.V."/>
            <person name="Lareau L.F."/>
            <person name="Lazarevic D."/>
            <person name="Lipovich L."/>
            <person name="Liu J."/>
            <person name="Liuni S."/>
            <person name="McWilliam S."/>
            <person name="Madan Babu M."/>
            <person name="Madera M."/>
            <person name="Marchionni L."/>
            <person name="Matsuda H."/>
            <person name="Matsuzawa S."/>
            <person name="Miki H."/>
            <person name="Mignone F."/>
            <person name="Miyake S."/>
            <person name="Morris K."/>
            <person name="Mottagui-Tabar S."/>
            <person name="Mulder N."/>
            <person name="Nakano N."/>
            <person name="Nakauchi H."/>
            <person name="Ng P."/>
            <person name="Nilsson R."/>
            <person name="Nishiguchi S."/>
            <person name="Nishikawa S."/>
            <person name="Nori F."/>
            <person name="Ohara O."/>
            <person name="Okazaki Y."/>
            <person name="Orlando V."/>
            <person name="Pang K.C."/>
            <person name="Pavan W.J."/>
            <person name="Pavesi G."/>
            <person name="Pesole G."/>
            <person name="Petrovsky N."/>
            <person name="Piazza S."/>
            <person name="Reed J."/>
            <person name="Reid J.F."/>
            <person name="Ring B.Z."/>
            <person name="Ringwald M."/>
            <person name="Rost B."/>
            <person name="Ruan Y."/>
            <person name="Salzberg S.L."/>
            <person name="Sandelin A."/>
            <person name="Schneider C."/>
            <person name="Schoenbach C."/>
            <person name="Sekiguchi K."/>
            <person name="Semple C.A."/>
            <person name="Seno S."/>
            <person name="Sessa L."/>
            <person name="Sheng Y."/>
            <person name="Shibata Y."/>
            <person name="Shimada H."/>
            <person name="Shimada K."/>
            <person name="Silva D."/>
            <person name="Sinclair B."/>
            <person name="Sperling S."/>
            <person name="Stupka E."/>
            <person name="Sugiura K."/>
            <person name="Sultana R."/>
            <person name="Takenaka Y."/>
            <person name="Taki K."/>
            <person name="Tammoja K."/>
            <person name="Tan S.L."/>
            <person name="Tang S."/>
            <person name="Taylor M.S."/>
            <person name="Tegner J."/>
            <person name="Teichmann S.A."/>
            <person name="Ueda H.R."/>
            <person name="van Nimwegen E."/>
            <person name="Verardo R."/>
            <person name="Wei C.L."/>
            <person name="Yagi K."/>
            <person name="Yamanishi H."/>
            <person name="Zabarovsky E."/>
            <person name="Zhu S."/>
            <person name="Zimmer A."/>
            <person name="Hide W."/>
            <person name="Bult C."/>
            <person name="Grimmond S.M."/>
            <person name="Teasdale R.D."/>
            <person name="Liu E.T."/>
            <person name="Brusic V."/>
            <person name="Quackenbush J."/>
            <person name="Wahlestedt C."/>
            <person name="Mattick J.S."/>
            <person name="Hume D.A."/>
            <person name="Kai C."/>
            <person name="Sasaki D."/>
            <person name="Tomaru Y."/>
            <person name="Fukuda S."/>
            <person name="Kanamori-Katayama M."/>
            <person name="Suzuki M."/>
            <person name="Aoki J."/>
            <person name="Arakawa T."/>
            <person name="Iida J."/>
            <person name="Imamura K."/>
            <person name="Itoh M."/>
            <person name="Kato T."/>
            <person name="Kawaji H."/>
            <person name="Kawagashira N."/>
            <person name="Kawashima T."/>
            <person name="Kojima M."/>
            <person name="Kondo S."/>
            <person name="Konno H."/>
            <person name="Nakano K."/>
            <person name="Ninomiya N."/>
            <person name="Nishio T."/>
            <person name="Okada M."/>
            <person name="Plessy C."/>
            <person name="Shibata K."/>
            <person name="Shiraki T."/>
            <person name="Suzuki S."/>
            <person name="Tagami M."/>
            <person name="Waki K."/>
            <person name="Watahiki A."/>
            <person name="Okamura-Oho Y."/>
            <person name="Suzuki H."/>
            <person name="Kawai J."/>
            <person name="Hayashizaki Y."/>
        </authorList>
    </citation>
    <scope>NUCLEOTIDE SEQUENCE [LARGE SCALE MRNA]</scope>
    <source>
        <strain>C57BL/6J</strain>
        <tissue>Embryo</tissue>
        <tissue>Lung</tissue>
    </source>
</reference>
<reference key="2">
    <citation type="journal article" date="2004" name="Genome Res.">
        <title>The status, quality, and expansion of the NIH full-length cDNA project: the Mammalian Gene Collection (MGC).</title>
        <authorList>
            <consortium name="The MGC Project Team"/>
        </authorList>
    </citation>
    <scope>NUCLEOTIDE SEQUENCE [LARGE SCALE MRNA]</scope>
    <source>
        <strain>FVB/N</strain>
        <strain>FVB/N-3</strain>
        <tissue>Mammary tumor</tissue>
    </source>
</reference>
<reference key="3">
    <citation type="journal article" date="2010" name="Cell">
        <title>A tissue-specific atlas of mouse protein phosphorylation and expression.</title>
        <authorList>
            <person name="Huttlin E.L."/>
            <person name="Jedrychowski M.P."/>
            <person name="Elias J.E."/>
            <person name="Goswami T."/>
            <person name="Rad R."/>
            <person name="Beausoleil S.A."/>
            <person name="Villen J."/>
            <person name="Haas W."/>
            <person name="Sowa M.E."/>
            <person name="Gygi S.P."/>
        </authorList>
    </citation>
    <scope>IDENTIFICATION BY MASS SPECTROMETRY [LARGE SCALE ANALYSIS]</scope>
    <source>
        <tissue>Heart</tissue>
        <tissue>Kidney</tissue>
        <tissue>Lung</tissue>
        <tissue>Spleen</tissue>
        <tissue>Testis</tissue>
    </source>
</reference>
<protein>
    <recommendedName>
        <fullName>BAG family molecular chaperone regulator 2</fullName>
        <shortName>BAG-2</shortName>
    </recommendedName>
    <alternativeName>
        <fullName>Bcl-2-associated athanogene 2</fullName>
    </alternativeName>
</protein>
<gene>
    <name type="primary">Bag2</name>
</gene>
<feature type="initiator methionine" description="Removed" evidence="1">
    <location>
        <position position="1"/>
    </location>
</feature>
<feature type="chain" id="PRO_0000088867" description="BAG family molecular chaperone regulator 2">
    <location>
        <begin position="2"/>
        <end position="210"/>
    </location>
</feature>
<feature type="domain" description="BAG" evidence="3">
    <location>
        <begin position="109"/>
        <end position="189"/>
    </location>
</feature>
<feature type="coiled-coil region" evidence="2">
    <location>
        <begin position="20"/>
        <end position="60"/>
    </location>
</feature>
<feature type="modified residue" description="N-acetylalanine" evidence="1">
    <location>
        <position position="2"/>
    </location>
</feature>
<feature type="modified residue" description="Phosphoserine" evidence="1">
    <location>
        <position position="20"/>
    </location>
</feature>
<feature type="modified residue" description="Phosphoserine" evidence="1">
    <location>
        <position position="31"/>
    </location>
</feature>
<feature type="modified residue" description="Phosphoserine" evidence="1">
    <location>
        <position position="73"/>
    </location>
</feature>
<feature type="helix" evidence="4">
    <location>
        <begin position="109"/>
        <end position="142"/>
    </location>
</feature>
<feature type="helix" evidence="4">
    <location>
        <begin position="153"/>
        <end position="160"/>
    </location>
</feature>
<feature type="helix" evidence="4">
    <location>
        <begin position="164"/>
        <end position="186"/>
    </location>
</feature>
<comment type="function">
    <text evidence="1">Co-chaperone for HSP70 and HSC70 chaperone proteins. Acts as a nucleotide-exchange factor (NEF) promoting the release of ADP from the HSP70 and HSC70 proteins thereby triggering client/substrate protein release.</text>
</comment>
<comment type="subunit">
    <text evidence="1">Binds to the ATPase domain of HSP/HSC70 chaperones. May interact with NWD1. Interacts with HSPA1A (via NBD), HSPA1B (via NBD) and HSPA8. May interact with DNJC9; the interaction seems to be histone-dependent (By similarity).</text>
</comment>
<accession>Q91YN9</accession>
<accession>Q3UMR7</accession>
<sequence length="210" mass="23474">MAQAKISAKAHEGRFCRSSSMADRSSRLLESLDQLELRVEALRDAATAVEQEKEILLEMIHSIQNSQDMRQISDGEREELNLTANRLMGRTLTVEVSVETIRNPQQEESLKHATRIIDEVVSKFLDDLGNAKSHLMSLYSACSSEVPPGPVDQKFQSIVIGCALEDQKKIKRRLETLLRNIDNSDKAIKLLEHAKGAGSKSLQNTDGKFN</sequence>
<evidence type="ECO:0000250" key="1">
    <source>
        <dbReference type="UniProtKB" id="O95816"/>
    </source>
</evidence>
<evidence type="ECO:0000255" key="2"/>
<evidence type="ECO:0000255" key="3">
    <source>
        <dbReference type="PROSITE-ProRule" id="PRU00369"/>
    </source>
</evidence>
<evidence type="ECO:0007829" key="4">
    <source>
        <dbReference type="PDB" id="3CQX"/>
    </source>
</evidence>
<keyword id="KW-0002">3D-structure</keyword>
<keyword id="KW-0007">Acetylation</keyword>
<keyword id="KW-0143">Chaperone</keyword>
<keyword id="KW-0175">Coiled coil</keyword>
<keyword id="KW-0597">Phosphoprotein</keyword>
<keyword id="KW-1185">Reference proteome</keyword>
<proteinExistence type="evidence at protein level"/>
<organism>
    <name type="scientific">Mus musculus</name>
    <name type="common">Mouse</name>
    <dbReference type="NCBI Taxonomy" id="10090"/>
    <lineage>
        <taxon>Eukaryota</taxon>
        <taxon>Metazoa</taxon>
        <taxon>Chordata</taxon>
        <taxon>Craniata</taxon>
        <taxon>Vertebrata</taxon>
        <taxon>Euteleostomi</taxon>
        <taxon>Mammalia</taxon>
        <taxon>Eutheria</taxon>
        <taxon>Euarchontoglires</taxon>
        <taxon>Glires</taxon>
        <taxon>Rodentia</taxon>
        <taxon>Myomorpha</taxon>
        <taxon>Muroidea</taxon>
        <taxon>Muridae</taxon>
        <taxon>Murinae</taxon>
        <taxon>Mus</taxon>
        <taxon>Mus</taxon>
    </lineage>
</organism>